<evidence type="ECO:0000255" key="1">
    <source>
        <dbReference type="HAMAP-Rule" id="MF_01557"/>
    </source>
</evidence>
<proteinExistence type="inferred from homology"/>
<gene>
    <name evidence="1" type="primary">lacC</name>
    <name type="ordered locus">MGAS10270_Spy1705</name>
</gene>
<keyword id="KW-0067">ATP-binding</keyword>
<keyword id="KW-0418">Kinase</keyword>
<keyword id="KW-0423">Lactose metabolism</keyword>
<keyword id="KW-0547">Nucleotide-binding</keyword>
<keyword id="KW-0808">Transferase</keyword>
<dbReference type="EC" id="2.7.1.144" evidence="1"/>
<dbReference type="EMBL" id="CP000260">
    <property type="protein sequence ID" value="ABF34770.1"/>
    <property type="molecule type" value="Genomic_DNA"/>
</dbReference>
<dbReference type="SMR" id="Q1JEY9"/>
<dbReference type="KEGG" id="sph:MGAS10270_Spy1705"/>
<dbReference type="HOGENOM" id="CLU_050013_5_0_9"/>
<dbReference type="UniPathway" id="UPA00704">
    <property type="reaction ID" value="UER00715"/>
</dbReference>
<dbReference type="Proteomes" id="UP000002436">
    <property type="component" value="Chromosome"/>
</dbReference>
<dbReference type="GO" id="GO:0005829">
    <property type="term" value="C:cytosol"/>
    <property type="evidence" value="ECO:0007669"/>
    <property type="project" value="TreeGrafter"/>
</dbReference>
<dbReference type="GO" id="GO:0005524">
    <property type="term" value="F:ATP binding"/>
    <property type="evidence" value="ECO:0007669"/>
    <property type="project" value="UniProtKB-KW"/>
</dbReference>
<dbReference type="GO" id="GO:0008443">
    <property type="term" value="F:phosphofructokinase activity"/>
    <property type="evidence" value="ECO:0007669"/>
    <property type="project" value="TreeGrafter"/>
</dbReference>
<dbReference type="GO" id="GO:0009024">
    <property type="term" value="F:tagatose-6-phosphate kinase activity"/>
    <property type="evidence" value="ECO:0007669"/>
    <property type="project" value="UniProtKB-UniRule"/>
</dbReference>
<dbReference type="GO" id="GO:2001059">
    <property type="term" value="P:D-tagatose 6-phosphate catabolic process"/>
    <property type="evidence" value="ECO:0007669"/>
    <property type="project" value="UniProtKB-UniRule"/>
</dbReference>
<dbReference type="GO" id="GO:0019512">
    <property type="term" value="P:lactose catabolic process via tagatose-6-phosphate"/>
    <property type="evidence" value="ECO:0007669"/>
    <property type="project" value="InterPro"/>
</dbReference>
<dbReference type="CDD" id="cd01164">
    <property type="entry name" value="FruK_PfkB_like"/>
    <property type="match status" value="1"/>
</dbReference>
<dbReference type="FunFam" id="3.40.1190.20:FF:000001">
    <property type="entry name" value="Phosphofructokinase"/>
    <property type="match status" value="1"/>
</dbReference>
<dbReference type="Gene3D" id="3.40.1190.20">
    <property type="match status" value="1"/>
</dbReference>
<dbReference type="HAMAP" id="MF_01557">
    <property type="entry name" value="LacC"/>
    <property type="match status" value="1"/>
</dbReference>
<dbReference type="InterPro" id="IPR002173">
    <property type="entry name" value="Carboh/pur_kinase_PfkB_CS"/>
</dbReference>
<dbReference type="InterPro" id="IPR005926">
    <property type="entry name" value="LacC"/>
</dbReference>
<dbReference type="InterPro" id="IPR011611">
    <property type="entry name" value="PfkB_dom"/>
</dbReference>
<dbReference type="InterPro" id="IPR029056">
    <property type="entry name" value="Ribokinase-like"/>
</dbReference>
<dbReference type="InterPro" id="IPR017583">
    <property type="entry name" value="Tagatose/fructose_Pkinase"/>
</dbReference>
<dbReference type="NCBIfam" id="TIGR03168">
    <property type="entry name" value="1-PFK"/>
    <property type="match status" value="1"/>
</dbReference>
<dbReference type="NCBIfam" id="TIGR01231">
    <property type="entry name" value="lacC"/>
    <property type="match status" value="1"/>
</dbReference>
<dbReference type="NCBIfam" id="NF010033">
    <property type="entry name" value="PRK13508.1"/>
    <property type="match status" value="1"/>
</dbReference>
<dbReference type="PANTHER" id="PTHR46566:SF5">
    <property type="entry name" value="1-PHOSPHOFRUCTOKINASE"/>
    <property type="match status" value="1"/>
</dbReference>
<dbReference type="PANTHER" id="PTHR46566">
    <property type="entry name" value="1-PHOSPHOFRUCTOKINASE-RELATED"/>
    <property type="match status" value="1"/>
</dbReference>
<dbReference type="Pfam" id="PF00294">
    <property type="entry name" value="PfkB"/>
    <property type="match status" value="1"/>
</dbReference>
<dbReference type="PIRSF" id="PIRSF000535">
    <property type="entry name" value="1PFK/6PFK/LacC"/>
    <property type="match status" value="1"/>
</dbReference>
<dbReference type="SUPFAM" id="SSF53613">
    <property type="entry name" value="Ribokinase-like"/>
    <property type="match status" value="1"/>
</dbReference>
<dbReference type="PROSITE" id="PS00583">
    <property type="entry name" value="PFKB_KINASES_1"/>
    <property type="match status" value="1"/>
</dbReference>
<protein>
    <recommendedName>
        <fullName evidence="1">Tagatose-6-phosphate kinase</fullName>
        <ecNumber evidence="1">2.7.1.144</ecNumber>
    </recommendedName>
    <alternativeName>
        <fullName evidence="1">Phosphotagatokinase</fullName>
    </alternativeName>
</protein>
<accession>Q1JEY9</accession>
<sequence length="309" mass="33513">MILTVTLNPAIDVSYPLNELKCDTVNRVVDVTKTPGGKGLNVSRVLNDFGETVKATGCIGGESGDFIINHLPDSILSRFYKISGDTRTCIAILHEGNQTEILEKGPLLSVDEIDGFTHHFKYLLNDVDVVTLSGSLPAGMPDDYYQKLIKIANLNGKKTVLDCSGNALEAVLKGDSKPTVIKPNLEELSQLLGKEMTKDFEALKEVLQDELFEGIEWIIVSLGADGVFAKHKDTFYNVDIPKIKIVSAVGSGDSTVAGIASGLANDEDDRALLTKANVLGMLNAQEKTTGHVNMANYDKLYQSIKIKEV</sequence>
<name>LACC_STRPD</name>
<reference key="1">
    <citation type="journal article" date="2006" name="Proc. Natl. Acad. Sci. U.S.A.">
        <title>Molecular genetic anatomy of inter- and intraserotype variation in the human bacterial pathogen group A Streptococcus.</title>
        <authorList>
            <person name="Beres S.B."/>
            <person name="Richter E.W."/>
            <person name="Nagiec M.J."/>
            <person name="Sumby P."/>
            <person name="Porcella S.F."/>
            <person name="DeLeo F.R."/>
            <person name="Musser J.M."/>
        </authorList>
    </citation>
    <scope>NUCLEOTIDE SEQUENCE [LARGE SCALE GENOMIC DNA]</scope>
    <source>
        <strain>MGAS10270</strain>
    </source>
</reference>
<comment type="catalytic activity">
    <reaction evidence="1">
        <text>D-tagatofuranose 6-phosphate + ATP = D-tagatofuranose 1,6-bisphosphate + ADP + H(+)</text>
        <dbReference type="Rhea" id="RHEA:12420"/>
        <dbReference type="ChEBI" id="CHEBI:15378"/>
        <dbReference type="ChEBI" id="CHEBI:30616"/>
        <dbReference type="ChEBI" id="CHEBI:58694"/>
        <dbReference type="ChEBI" id="CHEBI:58695"/>
        <dbReference type="ChEBI" id="CHEBI:456216"/>
        <dbReference type="EC" id="2.7.1.144"/>
    </reaction>
</comment>
<comment type="pathway">
    <text evidence="1">Carbohydrate metabolism; D-tagatose 6-phosphate degradation; D-glyceraldehyde 3-phosphate and glycerone phosphate from D-tagatose 6-phosphate: step 1/2.</text>
</comment>
<comment type="similarity">
    <text evidence="1">Belongs to the carbohydrate kinase PfkB family. LacC subfamily.</text>
</comment>
<organism>
    <name type="scientific">Streptococcus pyogenes serotype M2 (strain MGAS10270)</name>
    <dbReference type="NCBI Taxonomy" id="370552"/>
    <lineage>
        <taxon>Bacteria</taxon>
        <taxon>Bacillati</taxon>
        <taxon>Bacillota</taxon>
        <taxon>Bacilli</taxon>
        <taxon>Lactobacillales</taxon>
        <taxon>Streptococcaceae</taxon>
        <taxon>Streptococcus</taxon>
    </lineage>
</organism>
<feature type="chain" id="PRO_1000068941" description="Tagatose-6-phosphate kinase">
    <location>
        <begin position="1"/>
        <end position="309"/>
    </location>
</feature>